<sequence length="239" mass="26239">MEKAFDMNMIGDFVPTLTAYLPVTLYILTLSLLFGFVLGLFLALPRIYNIPIVNQLAKVYISFFRGTPIMVQLFIVFYGIPALTGLIGIDTSKMDPFYAAVATYALSNAAAAAEIIRAGVGSVDKGQTEAAYSIGLSGSQAFRRIVLPQALVQAFPNMGNMVISSLKDTSLAFSIGVMDMSGRGQTLITSSNHSLEVYIALSIVYYAVAVLFEWFFRVAEKRIKKNQTRIVTVFDMNIH</sequence>
<keyword id="KW-0029">Amino-acid transport</keyword>
<keyword id="KW-1003">Cell membrane</keyword>
<keyword id="KW-0472">Membrane</keyword>
<keyword id="KW-1185">Reference proteome</keyword>
<keyword id="KW-0812">Transmembrane</keyword>
<keyword id="KW-1133">Transmembrane helix</keyword>
<keyword id="KW-0813">Transport</keyword>
<dbReference type="EMBL" id="AF008220">
    <property type="protein sequence ID" value="AAC00327.1"/>
    <property type="molecule type" value="Genomic_DNA"/>
</dbReference>
<dbReference type="EMBL" id="AL009126">
    <property type="protein sequence ID" value="CAB14896.1"/>
    <property type="molecule type" value="Genomic_DNA"/>
</dbReference>
<dbReference type="PIR" id="F69996">
    <property type="entry name" value="F69996"/>
</dbReference>
<dbReference type="RefSeq" id="NP_390814.1">
    <property type="nucleotide sequence ID" value="NC_000964.3"/>
</dbReference>
<dbReference type="RefSeq" id="WP_004399112.1">
    <property type="nucleotide sequence ID" value="NZ_OZ025638.1"/>
</dbReference>
<dbReference type="SMR" id="O34315"/>
<dbReference type="FunCoup" id="O34315">
    <property type="interactions" value="211"/>
</dbReference>
<dbReference type="STRING" id="224308.BSU29360"/>
<dbReference type="TCDB" id="3.A.1.3.13">
    <property type="family name" value="the atp-binding cassette (abc) superfamily"/>
</dbReference>
<dbReference type="PaxDb" id="224308-BSU29360"/>
<dbReference type="EnsemblBacteria" id="CAB14896">
    <property type="protein sequence ID" value="CAB14896"/>
    <property type="gene ID" value="BSU_29360"/>
</dbReference>
<dbReference type="GeneID" id="936115"/>
<dbReference type="KEGG" id="bsu:BSU29360"/>
<dbReference type="PATRIC" id="fig|224308.179.peg.3190"/>
<dbReference type="eggNOG" id="COG0765">
    <property type="taxonomic scope" value="Bacteria"/>
</dbReference>
<dbReference type="InParanoid" id="O34315"/>
<dbReference type="OrthoDB" id="9805999at2"/>
<dbReference type="PhylomeDB" id="O34315"/>
<dbReference type="BioCyc" id="BSUB:BSU29360-MONOMER"/>
<dbReference type="SABIO-RK" id="O34315"/>
<dbReference type="Proteomes" id="UP000001570">
    <property type="component" value="Chromosome"/>
</dbReference>
<dbReference type="GO" id="GO:0043190">
    <property type="term" value="C:ATP-binding cassette (ABC) transporter complex"/>
    <property type="evidence" value="ECO:0007669"/>
    <property type="project" value="InterPro"/>
</dbReference>
<dbReference type="GO" id="GO:0005886">
    <property type="term" value="C:plasma membrane"/>
    <property type="evidence" value="ECO:0000318"/>
    <property type="project" value="GO_Central"/>
</dbReference>
<dbReference type="GO" id="GO:0022857">
    <property type="term" value="F:transmembrane transporter activity"/>
    <property type="evidence" value="ECO:0007669"/>
    <property type="project" value="InterPro"/>
</dbReference>
<dbReference type="GO" id="GO:0006865">
    <property type="term" value="P:amino acid transport"/>
    <property type="evidence" value="ECO:0000318"/>
    <property type="project" value="GO_Central"/>
</dbReference>
<dbReference type="CDD" id="cd06261">
    <property type="entry name" value="TM_PBP2"/>
    <property type="match status" value="1"/>
</dbReference>
<dbReference type="FunFam" id="1.10.3720.10:FF:000006">
    <property type="entry name" value="Glutamate/aspartate ABC transporter, permease protein GltK"/>
    <property type="match status" value="1"/>
</dbReference>
<dbReference type="Gene3D" id="1.10.3720.10">
    <property type="entry name" value="MetI-like"/>
    <property type="match status" value="1"/>
</dbReference>
<dbReference type="InterPro" id="IPR010065">
    <property type="entry name" value="AA_ABC_transptr_permease_3TM"/>
</dbReference>
<dbReference type="InterPro" id="IPR043429">
    <property type="entry name" value="ArtM/GltK/GlnP/TcyL/YhdX-like"/>
</dbReference>
<dbReference type="InterPro" id="IPR000515">
    <property type="entry name" value="MetI-like"/>
</dbReference>
<dbReference type="InterPro" id="IPR035906">
    <property type="entry name" value="MetI-like_sf"/>
</dbReference>
<dbReference type="NCBIfam" id="TIGR01726">
    <property type="entry name" value="HEQRo_perm_3TM"/>
    <property type="match status" value="1"/>
</dbReference>
<dbReference type="PANTHER" id="PTHR30614:SF45">
    <property type="entry name" value="L-CYSTINE TRANSPORT SYSTEM PERMEASE PROTEIN TCYL"/>
    <property type="match status" value="1"/>
</dbReference>
<dbReference type="PANTHER" id="PTHR30614">
    <property type="entry name" value="MEMBRANE COMPONENT OF AMINO ACID ABC TRANSPORTER"/>
    <property type="match status" value="1"/>
</dbReference>
<dbReference type="Pfam" id="PF00528">
    <property type="entry name" value="BPD_transp_1"/>
    <property type="match status" value="1"/>
</dbReference>
<dbReference type="SUPFAM" id="SSF161098">
    <property type="entry name" value="MetI-like"/>
    <property type="match status" value="1"/>
</dbReference>
<dbReference type="PROSITE" id="PS50928">
    <property type="entry name" value="ABC_TM1"/>
    <property type="match status" value="1"/>
</dbReference>
<proteinExistence type="evidence at protein level"/>
<gene>
    <name type="primary">tcyL</name>
    <name type="synonym">ytmL</name>
    <name type="ordered locus">BSU29360</name>
</gene>
<name>TCYL_BACSU</name>
<reference key="1">
    <citation type="journal article" date="1997" name="Microbiology">
        <title>Sequencing and functional annotation of the Bacillus subtilis genes in the 200 kb rrnB-dnaB region.</title>
        <authorList>
            <person name="Lapidus A."/>
            <person name="Galleron N."/>
            <person name="Sorokin A."/>
            <person name="Ehrlich S.D."/>
        </authorList>
    </citation>
    <scope>NUCLEOTIDE SEQUENCE [GENOMIC DNA]</scope>
    <source>
        <strain>168</strain>
    </source>
</reference>
<reference key="2">
    <citation type="journal article" date="1997" name="Nature">
        <title>The complete genome sequence of the Gram-positive bacterium Bacillus subtilis.</title>
        <authorList>
            <person name="Kunst F."/>
            <person name="Ogasawara N."/>
            <person name="Moszer I."/>
            <person name="Albertini A.M."/>
            <person name="Alloni G."/>
            <person name="Azevedo V."/>
            <person name="Bertero M.G."/>
            <person name="Bessieres P."/>
            <person name="Bolotin A."/>
            <person name="Borchert S."/>
            <person name="Borriss R."/>
            <person name="Boursier L."/>
            <person name="Brans A."/>
            <person name="Braun M."/>
            <person name="Brignell S.C."/>
            <person name="Bron S."/>
            <person name="Brouillet S."/>
            <person name="Bruschi C.V."/>
            <person name="Caldwell B."/>
            <person name="Capuano V."/>
            <person name="Carter N.M."/>
            <person name="Choi S.-K."/>
            <person name="Codani J.-J."/>
            <person name="Connerton I.F."/>
            <person name="Cummings N.J."/>
            <person name="Daniel R.A."/>
            <person name="Denizot F."/>
            <person name="Devine K.M."/>
            <person name="Duesterhoeft A."/>
            <person name="Ehrlich S.D."/>
            <person name="Emmerson P.T."/>
            <person name="Entian K.-D."/>
            <person name="Errington J."/>
            <person name="Fabret C."/>
            <person name="Ferrari E."/>
            <person name="Foulger D."/>
            <person name="Fritz C."/>
            <person name="Fujita M."/>
            <person name="Fujita Y."/>
            <person name="Fuma S."/>
            <person name="Galizzi A."/>
            <person name="Galleron N."/>
            <person name="Ghim S.-Y."/>
            <person name="Glaser P."/>
            <person name="Goffeau A."/>
            <person name="Golightly E.J."/>
            <person name="Grandi G."/>
            <person name="Guiseppi G."/>
            <person name="Guy B.J."/>
            <person name="Haga K."/>
            <person name="Haiech J."/>
            <person name="Harwood C.R."/>
            <person name="Henaut A."/>
            <person name="Hilbert H."/>
            <person name="Holsappel S."/>
            <person name="Hosono S."/>
            <person name="Hullo M.-F."/>
            <person name="Itaya M."/>
            <person name="Jones L.-M."/>
            <person name="Joris B."/>
            <person name="Karamata D."/>
            <person name="Kasahara Y."/>
            <person name="Klaerr-Blanchard M."/>
            <person name="Klein C."/>
            <person name="Kobayashi Y."/>
            <person name="Koetter P."/>
            <person name="Koningstein G."/>
            <person name="Krogh S."/>
            <person name="Kumano M."/>
            <person name="Kurita K."/>
            <person name="Lapidus A."/>
            <person name="Lardinois S."/>
            <person name="Lauber J."/>
            <person name="Lazarevic V."/>
            <person name="Lee S.-M."/>
            <person name="Levine A."/>
            <person name="Liu H."/>
            <person name="Masuda S."/>
            <person name="Mauel C."/>
            <person name="Medigue C."/>
            <person name="Medina N."/>
            <person name="Mellado R.P."/>
            <person name="Mizuno M."/>
            <person name="Moestl D."/>
            <person name="Nakai S."/>
            <person name="Noback M."/>
            <person name="Noone D."/>
            <person name="O'Reilly M."/>
            <person name="Ogawa K."/>
            <person name="Ogiwara A."/>
            <person name="Oudega B."/>
            <person name="Park S.-H."/>
            <person name="Parro V."/>
            <person name="Pohl T.M."/>
            <person name="Portetelle D."/>
            <person name="Porwollik S."/>
            <person name="Prescott A.M."/>
            <person name="Presecan E."/>
            <person name="Pujic P."/>
            <person name="Purnelle B."/>
            <person name="Rapoport G."/>
            <person name="Rey M."/>
            <person name="Reynolds S."/>
            <person name="Rieger M."/>
            <person name="Rivolta C."/>
            <person name="Rocha E."/>
            <person name="Roche B."/>
            <person name="Rose M."/>
            <person name="Sadaie Y."/>
            <person name="Sato T."/>
            <person name="Scanlan E."/>
            <person name="Schleich S."/>
            <person name="Schroeter R."/>
            <person name="Scoffone F."/>
            <person name="Sekiguchi J."/>
            <person name="Sekowska A."/>
            <person name="Seror S.J."/>
            <person name="Serror P."/>
            <person name="Shin B.-S."/>
            <person name="Soldo B."/>
            <person name="Sorokin A."/>
            <person name="Tacconi E."/>
            <person name="Takagi T."/>
            <person name="Takahashi H."/>
            <person name="Takemaru K."/>
            <person name="Takeuchi M."/>
            <person name="Tamakoshi A."/>
            <person name="Tanaka T."/>
            <person name="Terpstra P."/>
            <person name="Tognoni A."/>
            <person name="Tosato V."/>
            <person name="Uchiyama S."/>
            <person name="Vandenbol M."/>
            <person name="Vannier F."/>
            <person name="Vassarotti A."/>
            <person name="Viari A."/>
            <person name="Wambutt R."/>
            <person name="Wedler E."/>
            <person name="Wedler H."/>
            <person name="Weitzenegger T."/>
            <person name="Winters P."/>
            <person name="Wipat A."/>
            <person name="Yamamoto H."/>
            <person name="Yamane K."/>
            <person name="Yasumoto K."/>
            <person name="Yata K."/>
            <person name="Yoshida K."/>
            <person name="Yoshikawa H.-F."/>
            <person name="Zumstein E."/>
            <person name="Yoshikawa H."/>
            <person name="Danchin A."/>
        </authorList>
    </citation>
    <scope>NUCLEOTIDE SEQUENCE [LARGE SCALE GENOMIC DNA]</scope>
    <source>
        <strain>168</strain>
    </source>
</reference>
<reference key="3">
    <citation type="journal article" date="2002" name="J. Bacteriol.">
        <title>Global expression profile of Bacillus subtilis grown in the presence of sulfate or methionine.</title>
        <authorList>
            <person name="Auger S."/>
            <person name="Danchin A."/>
            <person name="Martin-Verstraete I."/>
        </authorList>
    </citation>
    <scope>INDUCTION</scope>
    <source>
        <strain>168</strain>
    </source>
</reference>
<reference key="4">
    <citation type="journal article" date="2004" name="J. Bacteriol.">
        <title>Three different systems participate in L-cystine uptake in Bacillus subtilis.</title>
        <authorList>
            <person name="Burguiere P."/>
            <person name="Auger S."/>
            <person name="Hullo M.-F."/>
            <person name="Danchin A."/>
            <person name="Martin-Verstraete I."/>
        </authorList>
    </citation>
    <scope>FUNCTION IN L-CYSTINE TRANSPORT</scope>
    <scope>BIOPHYSICOCHEMICAL PROPERTIES</scope>
    <source>
        <strain>168</strain>
    </source>
</reference>
<evidence type="ECO:0000255" key="1">
    <source>
        <dbReference type="PROSITE-ProRule" id="PRU00441"/>
    </source>
</evidence>
<evidence type="ECO:0000269" key="2">
    <source>
    </source>
</evidence>
<evidence type="ECO:0000269" key="3">
    <source>
    </source>
</evidence>
<evidence type="ECO:0000305" key="4"/>
<feature type="chain" id="PRO_0000060274" description="L-cystine transport system permease protein TcyL">
    <location>
        <begin position="1"/>
        <end position="239"/>
    </location>
</feature>
<feature type="transmembrane region" description="Helical" evidence="1">
    <location>
        <begin position="25"/>
        <end position="45"/>
    </location>
</feature>
<feature type="transmembrane region" description="Helical" evidence="1">
    <location>
        <begin position="69"/>
        <end position="89"/>
    </location>
</feature>
<feature type="transmembrane region" description="Helical" evidence="1">
    <location>
        <begin position="96"/>
        <end position="116"/>
    </location>
</feature>
<feature type="transmembrane region" description="Helical" evidence="1">
    <location>
        <begin position="196"/>
        <end position="216"/>
    </location>
</feature>
<feature type="domain" description="ABC transmembrane type-1" evidence="1">
    <location>
        <begin position="21"/>
        <end position="216"/>
    </location>
</feature>
<organism>
    <name type="scientific">Bacillus subtilis (strain 168)</name>
    <dbReference type="NCBI Taxonomy" id="224308"/>
    <lineage>
        <taxon>Bacteria</taxon>
        <taxon>Bacillati</taxon>
        <taxon>Bacillota</taxon>
        <taxon>Bacilli</taxon>
        <taxon>Bacillales</taxon>
        <taxon>Bacillaceae</taxon>
        <taxon>Bacillus</taxon>
    </lineage>
</organism>
<comment type="function">
    <text evidence="3 4">Part of the ABC transporter complex TcyJKLMN involved in L-cystine import. Probably responsible for the translocation of the substrate across the membrane (Probable). Is also involved in cystathionine, djenkolate, and S-methylcysteine transport.</text>
</comment>
<comment type="biophysicochemical properties">
    <kinetics>
        <KM evidence="3">2.5 uM for L-cystine</KM>
        <Vmax evidence="3">0.5 nmol/min/mg enzyme for L-cystine transport</Vmax>
    </kinetics>
</comment>
<comment type="subunit">
    <text evidence="4">The complex is composed of two ATP-binding proteins (TcyN), two transmembrane proteins (TcyL and TcyM) and two solute-binding proteins (TcyJ and TcyK).</text>
</comment>
<comment type="subcellular location">
    <subcellularLocation>
        <location evidence="4">Cell membrane</location>
        <topology evidence="1">Multi-pass membrane protein</topology>
    </subcellularLocation>
</comment>
<comment type="induction">
    <text evidence="2">More strongly expressed in the presence of methionine than in the presence of sulfate.</text>
</comment>
<comment type="similarity">
    <text evidence="4">Belongs to the binding-protein-dependent transport system permease family.</text>
</comment>
<accession>O34315</accession>
<protein>
    <recommendedName>
        <fullName>L-cystine transport system permease protein TcyL</fullName>
    </recommendedName>
</protein>